<name>PUB3_SCHPO</name>
<keyword id="KW-1185">Reference proteome</keyword>
<keyword id="KW-0677">Repeat</keyword>
<keyword id="KW-0808">Transferase</keyword>
<keyword id="KW-0833">Ubl conjugation pathway</keyword>
<gene>
    <name type="primary">pub3</name>
    <name type="ORF">SPBC16E9.11c</name>
</gene>
<evidence type="ECO:0000255" key="1">
    <source>
        <dbReference type="PROSITE-ProRule" id="PRU00041"/>
    </source>
</evidence>
<evidence type="ECO:0000255" key="2">
    <source>
        <dbReference type="PROSITE-ProRule" id="PRU00104"/>
    </source>
</evidence>
<evidence type="ECO:0000255" key="3">
    <source>
        <dbReference type="PROSITE-ProRule" id="PRU00224"/>
    </source>
</evidence>
<evidence type="ECO:0000256" key="4">
    <source>
        <dbReference type="SAM" id="MobiDB-lite"/>
    </source>
</evidence>
<evidence type="ECO:0000305" key="5"/>
<sequence length="786" mass="89260">MEQGAKRVRFYIVAADGLSKRDLFRQPDPFAILTVDGEQTHTTKVIKKSVNPYWNEGFEVTVKPSSVISIRLFDQKKFKKKDQGFLGLVSFRMREVGSFRSNREVSLTRPLKKSSTTNLSVLGNLVLKVAPSKIRAPAGNHSSTTANRTTSTPTTTTARTTRTTPRPTATTNTSNQSTSNSTRNGTSAATSNGTGTGAGTGASHRSSPVTNRQTNNTSALSNSNAHIMSSFEDQYGRLPPGWERRADSLGRTYYVDHNTRTTTWTRPASSTNPVHNTSSDSQRLNHQNRHLPDDSNPSLMQSDSGNDLPFGWEMRYTDTGRPYFVDHNTRTTTWVDPRNPLVRPNGGSSTVGSLMQPQSLSHLGPLPSGWEMRLTNSARVYFVDHNTKTTTWDDPRLPSALDQDVPQYKCDFRRKLIYFRSQPGMRPLPGQCNVKVRRDHIFEDSYAEIMRYSAHDLKKRLMIRFDGEDGLDYGGLSREFFFLLSHKMFDPIYCLFEYSAVDNYTLQINPHSSINPEHLNYFRFIGRVIGLAIFHRRFLDAFFVVSLYKKLLRKKVSLADMESIDAEFYRSLKWVLENDITGILDLTFSVEEDHFGEVRTVELITNGENIEVTEENKKKYVDLVTEWRVSKRVEQQFNAFYSGFVELVSPDLVNVFDERELELLIGGISDVDVEDWKSHTEYRTYIATDPVIKWFWEIIAGWKNEDRSKLLQFATGTSRIPVNGFRDLQGSDGPRKFTIEKAGTPDQLPVAHTCFNRLDLPDYPSKDTLHEKLSLAVENTVGFGNE</sequence>
<reference key="1">
    <citation type="journal article" date="2002" name="Nature">
        <title>The genome sequence of Schizosaccharomyces pombe.</title>
        <authorList>
            <person name="Wood V."/>
            <person name="Gwilliam R."/>
            <person name="Rajandream M.A."/>
            <person name="Lyne M.H."/>
            <person name="Lyne R."/>
            <person name="Stewart A."/>
            <person name="Sgouros J.G."/>
            <person name="Peat N."/>
            <person name="Hayles J."/>
            <person name="Baker S.G."/>
            <person name="Basham D."/>
            <person name="Bowman S."/>
            <person name="Brooks K."/>
            <person name="Brown D."/>
            <person name="Brown S."/>
            <person name="Chillingworth T."/>
            <person name="Churcher C.M."/>
            <person name="Collins M."/>
            <person name="Connor R."/>
            <person name="Cronin A."/>
            <person name="Davis P."/>
            <person name="Feltwell T."/>
            <person name="Fraser A."/>
            <person name="Gentles S."/>
            <person name="Goble A."/>
            <person name="Hamlin N."/>
            <person name="Harris D.E."/>
            <person name="Hidalgo J."/>
            <person name="Hodgson G."/>
            <person name="Holroyd S."/>
            <person name="Hornsby T."/>
            <person name="Howarth S."/>
            <person name="Huckle E.J."/>
            <person name="Hunt S."/>
            <person name="Jagels K."/>
            <person name="James K.D."/>
            <person name="Jones L."/>
            <person name="Jones M."/>
            <person name="Leather S."/>
            <person name="McDonald S."/>
            <person name="McLean J."/>
            <person name="Mooney P."/>
            <person name="Moule S."/>
            <person name="Mungall K.L."/>
            <person name="Murphy L.D."/>
            <person name="Niblett D."/>
            <person name="Odell C."/>
            <person name="Oliver K."/>
            <person name="O'Neil S."/>
            <person name="Pearson D."/>
            <person name="Quail M.A."/>
            <person name="Rabbinowitsch E."/>
            <person name="Rutherford K.M."/>
            <person name="Rutter S."/>
            <person name="Saunders D."/>
            <person name="Seeger K."/>
            <person name="Sharp S."/>
            <person name="Skelton J."/>
            <person name="Simmonds M.N."/>
            <person name="Squares R."/>
            <person name="Squares S."/>
            <person name="Stevens K."/>
            <person name="Taylor K."/>
            <person name="Taylor R.G."/>
            <person name="Tivey A."/>
            <person name="Walsh S.V."/>
            <person name="Warren T."/>
            <person name="Whitehead S."/>
            <person name="Woodward J.R."/>
            <person name="Volckaert G."/>
            <person name="Aert R."/>
            <person name="Robben J."/>
            <person name="Grymonprez B."/>
            <person name="Weltjens I."/>
            <person name="Vanstreels E."/>
            <person name="Rieger M."/>
            <person name="Schaefer M."/>
            <person name="Mueller-Auer S."/>
            <person name="Gabel C."/>
            <person name="Fuchs M."/>
            <person name="Duesterhoeft A."/>
            <person name="Fritzc C."/>
            <person name="Holzer E."/>
            <person name="Moestl D."/>
            <person name="Hilbert H."/>
            <person name="Borzym K."/>
            <person name="Langer I."/>
            <person name="Beck A."/>
            <person name="Lehrach H."/>
            <person name="Reinhardt R."/>
            <person name="Pohl T.M."/>
            <person name="Eger P."/>
            <person name="Zimmermann W."/>
            <person name="Wedler H."/>
            <person name="Wambutt R."/>
            <person name="Purnelle B."/>
            <person name="Goffeau A."/>
            <person name="Cadieu E."/>
            <person name="Dreano S."/>
            <person name="Gloux S."/>
            <person name="Lelaure V."/>
            <person name="Mottier S."/>
            <person name="Galibert F."/>
            <person name="Aves S.J."/>
            <person name="Xiang Z."/>
            <person name="Hunt C."/>
            <person name="Moore K."/>
            <person name="Hurst S.M."/>
            <person name="Lucas M."/>
            <person name="Rochet M."/>
            <person name="Gaillardin C."/>
            <person name="Tallada V.A."/>
            <person name="Garzon A."/>
            <person name="Thode G."/>
            <person name="Daga R.R."/>
            <person name="Cruzado L."/>
            <person name="Jimenez J."/>
            <person name="Sanchez M."/>
            <person name="del Rey F."/>
            <person name="Benito J."/>
            <person name="Dominguez A."/>
            <person name="Revuelta J.L."/>
            <person name="Moreno S."/>
            <person name="Armstrong J."/>
            <person name="Forsburg S.L."/>
            <person name="Cerutti L."/>
            <person name="Lowe T."/>
            <person name="McCombie W.R."/>
            <person name="Paulsen I."/>
            <person name="Potashkin J."/>
            <person name="Shpakovski G.V."/>
            <person name="Ussery D."/>
            <person name="Barrell B.G."/>
            <person name="Nurse P."/>
        </authorList>
    </citation>
    <scope>NUCLEOTIDE SEQUENCE [LARGE SCALE GENOMIC DNA]</scope>
    <source>
        <strain>972 / ATCC 24843</strain>
    </source>
</reference>
<reference key="2">
    <citation type="journal article" date="1997" name="DNA Res.">
        <title>Identification of open reading frames in Schizosaccharomyces pombe cDNAs.</title>
        <authorList>
            <person name="Yoshioka S."/>
            <person name="Kato K."/>
            <person name="Nakai K."/>
            <person name="Okayama H."/>
            <person name="Nojima H."/>
        </authorList>
    </citation>
    <scope>NUCLEOTIDE SEQUENCE [LARGE SCALE MRNA] OF 637-786</scope>
    <source>
        <strain>PR745</strain>
    </source>
</reference>
<accession>O14326</accession>
<accession>P79055</accession>
<proteinExistence type="evidence at transcript level"/>
<protein>
    <recommendedName>
        <fullName>E3 ubiquitin-protein ligase pub3</fullName>
        <ecNumber>2.3.2.26</ecNumber>
    </recommendedName>
    <alternativeName>
        <fullName>HECT-type E3 ubiquitin transferase pub3</fullName>
    </alternativeName>
</protein>
<dbReference type="EC" id="2.3.2.26"/>
<dbReference type="EMBL" id="CU329671">
    <property type="protein sequence ID" value="CAB16903.1"/>
    <property type="molecule type" value="Genomic_DNA"/>
</dbReference>
<dbReference type="EMBL" id="AB001023">
    <property type="protein sequence ID" value="BAA19217.1"/>
    <property type="molecule type" value="mRNA"/>
</dbReference>
<dbReference type="PIR" id="T39585">
    <property type="entry name" value="T39585"/>
</dbReference>
<dbReference type="RefSeq" id="NP_595793.1">
    <property type="nucleotide sequence ID" value="NM_001021694.2"/>
</dbReference>
<dbReference type="SMR" id="O14326"/>
<dbReference type="BioGRID" id="276500">
    <property type="interactions" value="79"/>
</dbReference>
<dbReference type="FunCoup" id="O14326">
    <property type="interactions" value="607"/>
</dbReference>
<dbReference type="STRING" id="284812.O14326"/>
<dbReference type="iPTMnet" id="O14326"/>
<dbReference type="PaxDb" id="4896-SPBC16E9.11c.1"/>
<dbReference type="EnsemblFungi" id="SPBC16E9.11c.1">
    <property type="protein sequence ID" value="SPBC16E9.11c.1:pep"/>
    <property type="gene ID" value="SPBC16E9.11c"/>
</dbReference>
<dbReference type="GeneID" id="2539956"/>
<dbReference type="KEGG" id="spo:2539956"/>
<dbReference type="PomBase" id="SPBC16E9.11c">
    <property type="gene designation" value="pub3"/>
</dbReference>
<dbReference type="VEuPathDB" id="FungiDB:SPBC16E9.11c"/>
<dbReference type="eggNOG" id="KOG0940">
    <property type="taxonomic scope" value="Eukaryota"/>
</dbReference>
<dbReference type="HOGENOM" id="CLU_002173_0_0_1"/>
<dbReference type="InParanoid" id="O14326"/>
<dbReference type="OMA" id="SHKMFDP"/>
<dbReference type="PhylomeDB" id="O14326"/>
<dbReference type="Reactome" id="R-SPO-8948747">
    <property type="pathway name" value="Regulation of PTEN localization"/>
</dbReference>
<dbReference type="Reactome" id="R-SPO-8948751">
    <property type="pathway name" value="Regulation of PTEN stability and activity"/>
</dbReference>
<dbReference type="Reactome" id="R-SPO-9013406">
    <property type="pathway name" value="RHOQ GTPase cycle"/>
</dbReference>
<dbReference type="Reactome" id="R-SPO-9013420">
    <property type="pathway name" value="RHOU GTPase cycle"/>
</dbReference>
<dbReference type="Reactome" id="R-SPO-983168">
    <property type="pathway name" value="Antigen processing: Ubiquitination &amp; Proteasome degradation"/>
</dbReference>
<dbReference type="UniPathway" id="UPA00143"/>
<dbReference type="PRO" id="PR:O14326"/>
<dbReference type="Proteomes" id="UP000002485">
    <property type="component" value="Chromosome II"/>
</dbReference>
<dbReference type="GO" id="GO:0005737">
    <property type="term" value="C:cytoplasm"/>
    <property type="evidence" value="ECO:0000318"/>
    <property type="project" value="GO_Central"/>
</dbReference>
<dbReference type="GO" id="GO:0005543">
    <property type="term" value="F:phospholipid binding"/>
    <property type="evidence" value="ECO:0000255"/>
    <property type="project" value="PomBase"/>
</dbReference>
<dbReference type="GO" id="GO:0061630">
    <property type="term" value="F:ubiquitin protein ligase activity"/>
    <property type="evidence" value="ECO:0000318"/>
    <property type="project" value="GO_Central"/>
</dbReference>
<dbReference type="GO" id="GO:0046907">
    <property type="term" value="P:intracellular transport"/>
    <property type="evidence" value="ECO:0007669"/>
    <property type="project" value="UniProtKB-ARBA"/>
</dbReference>
<dbReference type="GO" id="GO:0016567">
    <property type="term" value="P:protein ubiquitination"/>
    <property type="evidence" value="ECO:0007669"/>
    <property type="project" value="UniProtKB-UniPathway"/>
</dbReference>
<dbReference type="GO" id="GO:0006511">
    <property type="term" value="P:ubiquitin-dependent protein catabolic process"/>
    <property type="evidence" value="ECO:0000318"/>
    <property type="project" value="GO_Central"/>
</dbReference>
<dbReference type="CDD" id="cd08382">
    <property type="entry name" value="C2_Smurf-like"/>
    <property type="match status" value="1"/>
</dbReference>
<dbReference type="CDD" id="cd00078">
    <property type="entry name" value="HECTc"/>
    <property type="match status" value="1"/>
</dbReference>
<dbReference type="CDD" id="cd00201">
    <property type="entry name" value="WW"/>
    <property type="match status" value="3"/>
</dbReference>
<dbReference type="FunFam" id="2.20.70.10:FF:000017">
    <property type="entry name" value="E3 ubiquitin-protein ligase"/>
    <property type="match status" value="1"/>
</dbReference>
<dbReference type="FunFam" id="3.90.1750.10:FF:000005">
    <property type="entry name" value="E3 ubiquitin-protein ligase"/>
    <property type="match status" value="1"/>
</dbReference>
<dbReference type="FunFam" id="3.30.2160.10:FF:000001">
    <property type="entry name" value="E3 ubiquitin-protein ligase NEDD4-like"/>
    <property type="match status" value="1"/>
</dbReference>
<dbReference type="FunFam" id="3.30.2410.10:FF:000001">
    <property type="entry name" value="E3 ubiquitin-protein ligase NEDD4-like"/>
    <property type="match status" value="1"/>
</dbReference>
<dbReference type="Gene3D" id="2.20.70.10">
    <property type="match status" value="2"/>
</dbReference>
<dbReference type="Gene3D" id="2.60.40.150">
    <property type="entry name" value="C2 domain"/>
    <property type="match status" value="1"/>
</dbReference>
<dbReference type="Gene3D" id="3.30.2160.10">
    <property type="entry name" value="Hect, E3 ligase catalytic domain"/>
    <property type="match status" value="1"/>
</dbReference>
<dbReference type="Gene3D" id="3.30.2410.10">
    <property type="entry name" value="Hect, E3 ligase catalytic domain"/>
    <property type="match status" value="1"/>
</dbReference>
<dbReference type="Gene3D" id="3.90.1750.10">
    <property type="entry name" value="Hect, E3 ligase catalytic domains"/>
    <property type="match status" value="1"/>
</dbReference>
<dbReference type="InterPro" id="IPR000008">
    <property type="entry name" value="C2_dom"/>
</dbReference>
<dbReference type="InterPro" id="IPR035892">
    <property type="entry name" value="C2_domain_sf"/>
</dbReference>
<dbReference type="InterPro" id="IPR024928">
    <property type="entry name" value="E3_ub_ligase_SMURF1"/>
</dbReference>
<dbReference type="InterPro" id="IPR050409">
    <property type="entry name" value="E3_ubiq-protein_ligase"/>
</dbReference>
<dbReference type="InterPro" id="IPR000569">
    <property type="entry name" value="HECT_dom"/>
</dbReference>
<dbReference type="InterPro" id="IPR035983">
    <property type="entry name" value="Hect_E3_ubiquitin_ligase"/>
</dbReference>
<dbReference type="InterPro" id="IPR001202">
    <property type="entry name" value="WW_dom"/>
</dbReference>
<dbReference type="InterPro" id="IPR036020">
    <property type="entry name" value="WW_dom_sf"/>
</dbReference>
<dbReference type="PANTHER" id="PTHR11254:SF436">
    <property type="entry name" value="E3 UBIQUITIN-PROTEIN LIGASE PUB3"/>
    <property type="match status" value="1"/>
</dbReference>
<dbReference type="PANTHER" id="PTHR11254">
    <property type="entry name" value="HECT DOMAIN UBIQUITIN-PROTEIN LIGASE"/>
    <property type="match status" value="1"/>
</dbReference>
<dbReference type="Pfam" id="PF00168">
    <property type="entry name" value="C2"/>
    <property type="match status" value="1"/>
</dbReference>
<dbReference type="Pfam" id="PF00632">
    <property type="entry name" value="HECT"/>
    <property type="match status" value="1"/>
</dbReference>
<dbReference type="Pfam" id="PF00397">
    <property type="entry name" value="WW"/>
    <property type="match status" value="3"/>
</dbReference>
<dbReference type="PIRSF" id="PIRSF001569">
    <property type="entry name" value="E3_ub_ligase_SMURF1"/>
    <property type="match status" value="1"/>
</dbReference>
<dbReference type="SMART" id="SM00239">
    <property type="entry name" value="C2"/>
    <property type="match status" value="1"/>
</dbReference>
<dbReference type="SMART" id="SM00119">
    <property type="entry name" value="HECTc"/>
    <property type="match status" value="1"/>
</dbReference>
<dbReference type="SMART" id="SM00456">
    <property type="entry name" value="WW"/>
    <property type="match status" value="3"/>
</dbReference>
<dbReference type="SUPFAM" id="SSF49562">
    <property type="entry name" value="C2 domain (Calcium/lipid-binding domain, CaLB)"/>
    <property type="match status" value="1"/>
</dbReference>
<dbReference type="SUPFAM" id="SSF56204">
    <property type="entry name" value="Hect, E3 ligase catalytic domain"/>
    <property type="match status" value="1"/>
</dbReference>
<dbReference type="SUPFAM" id="SSF51045">
    <property type="entry name" value="WW domain"/>
    <property type="match status" value="3"/>
</dbReference>
<dbReference type="PROSITE" id="PS50004">
    <property type="entry name" value="C2"/>
    <property type="match status" value="1"/>
</dbReference>
<dbReference type="PROSITE" id="PS50237">
    <property type="entry name" value="HECT"/>
    <property type="match status" value="1"/>
</dbReference>
<dbReference type="PROSITE" id="PS01159">
    <property type="entry name" value="WW_DOMAIN_1"/>
    <property type="match status" value="3"/>
</dbReference>
<dbReference type="PROSITE" id="PS50020">
    <property type="entry name" value="WW_DOMAIN_2"/>
    <property type="match status" value="3"/>
</dbReference>
<feature type="chain" id="PRO_0000120334" description="E3 ubiquitin-protein ligase pub3">
    <location>
        <begin position="1"/>
        <end position="786"/>
    </location>
</feature>
<feature type="domain" description="C2" evidence="1">
    <location>
        <begin position="1"/>
        <end position="109"/>
    </location>
</feature>
<feature type="domain" description="WW 1" evidence="3">
    <location>
        <begin position="236"/>
        <end position="269"/>
    </location>
</feature>
<feature type="domain" description="WW 2" evidence="3">
    <location>
        <begin position="306"/>
        <end position="339"/>
    </location>
</feature>
<feature type="domain" description="WW 3" evidence="3">
    <location>
        <begin position="364"/>
        <end position="397"/>
    </location>
</feature>
<feature type="domain" description="HECT" evidence="2">
    <location>
        <begin position="453"/>
        <end position="786"/>
    </location>
</feature>
<feature type="region of interest" description="Disordered" evidence="4">
    <location>
        <begin position="134"/>
        <end position="225"/>
    </location>
</feature>
<feature type="region of interest" description="Disordered" evidence="4">
    <location>
        <begin position="263"/>
        <end position="306"/>
    </location>
</feature>
<feature type="compositionally biased region" description="Low complexity" evidence="4">
    <location>
        <begin position="142"/>
        <end position="193"/>
    </location>
</feature>
<feature type="compositionally biased region" description="Polar residues" evidence="4">
    <location>
        <begin position="204"/>
        <end position="213"/>
    </location>
</feature>
<feature type="compositionally biased region" description="Low complexity" evidence="4">
    <location>
        <begin position="214"/>
        <end position="225"/>
    </location>
</feature>
<feature type="compositionally biased region" description="Polar residues" evidence="4">
    <location>
        <begin position="263"/>
        <end position="285"/>
    </location>
</feature>
<feature type="compositionally biased region" description="Polar residues" evidence="4">
    <location>
        <begin position="295"/>
        <end position="305"/>
    </location>
</feature>
<feature type="active site" description="Glycyl thioester intermediate" evidence="2">
    <location>
        <position position="754"/>
    </location>
</feature>
<feature type="sequence conflict" description="In Ref. 2." evidence="5" ref="2">
    <original>FNAFYSGFVELVS</original>
    <variation>LMHFILVLLNWYP</variation>
    <location>
        <begin position="637"/>
        <end position="649"/>
    </location>
</feature>
<comment type="function">
    <text>E3 ubiquitin-protein ligase which accepts ubiquitin from an E2 ubiquitin-conjugating enzyme in the form of a thioester and then directly transfers the ubiquitin to targeted substrates.</text>
</comment>
<comment type="catalytic activity">
    <reaction>
        <text>S-ubiquitinyl-[E2 ubiquitin-conjugating enzyme]-L-cysteine + [acceptor protein]-L-lysine = [E2 ubiquitin-conjugating enzyme]-L-cysteine + N(6)-ubiquitinyl-[acceptor protein]-L-lysine.</text>
        <dbReference type="EC" id="2.3.2.26"/>
    </reaction>
</comment>
<comment type="pathway">
    <text>Protein modification; protein ubiquitination.</text>
</comment>
<comment type="miscellaneous">
    <text>A cysteine residue is required for ubiquitin-thioester formation.</text>
</comment>
<organism>
    <name type="scientific">Schizosaccharomyces pombe (strain 972 / ATCC 24843)</name>
    <name type="common">Fission yeast</name>
    <dbReference type="NCBI Taxonomy" id="284812"/>
    <lineage>
        <taxon>Eukaryota</taxon>
        <taxon>Fungi</taxon>
        <taxon>Dikarya</taxon>
        <taxon>Ascomycota</taxon>
        <taxon>Taphrinomycotina</taxon>
        <taxon>Schizosaccharomycetes</taxon>
        <taxon>Schizosaccharomycetales</taxon>
        <taxon>Schizosaccharomycetaceae</taxon>
        <taxon>Schizosaccharomyces</taxon>
    </lineage>
</organism>